<accession>B7KGT7</accession>
<name>HIS1_GLOC7</name>
<feature type="chain" id="PRO_1000135277" description="ATP phosphoribosyltransferase">
    <location>
        <begin position="1"/>
        <end position="215"/>
    </location>
</feature>
<sequence>MITIALPKGALLSDSIALFKQIGLDFTAFLDSSNRQLQISDPTNTAKALLVRAQDVPVYVEYGQAQLGIVGYDVLLEKTPKVANLADLKFGACRMSVAVPAKSPYRSSIELPPNGRVASKFVHCAEDYFRRLDIPVEIIPLYGSVELGPITGMSDAIVDLVSTGRTLRENGLVEIDVLFESTARLIAHPLSYRLNLDHLDQWVNKLRQINLKPVA</sequence>
<organism>
    <name type="scientific">Gloeothece citriformis (strain PCC 7424)</name>
    <name type="common">Cyanothece sp. (strain PCC 7424)</name>
    <dbReference type="NCBI Taxonomy" id="65393"/>
    <lineage>
        <taxon>Bacteria</taxon>
        <taxon>Bacillati</taxon>
        <taxon>Cyanobacteriota</taxon>
        <taxon>Cyanophyceae</taxon>
        <taxon>Oscillatoriophycideae</taxon>
        <taxon>Chroococcales</taxon>
        <taxon>Aphanothecaceae</taxon>
        <taxon>Gloeothece</taxon>
        <taxon>Gloeothece citriformis</taxon>
    </lineage>
</organism>
<keyword id="KW-0028">Amino-acid biosynthesis</keyword>
<keyword id="KW-0067">ATP-binding</keyword>
<keyword id="KW-0963">Cytoplasm</keyword>
<keyword id="KW-0328">Glycosyltransferase</keyword>
<keyword id="KW-0368">Histidine biosynthesis</keyword>
<keyword id="KW-0547">Nucleotide-binding</keyword>
<keyword id="KW-1185">Reference proteome</keyword>
<keyword id="KW-0808">Transferase</keyword>
<reference key="1">
    <citation type="journal article" date="2011" name="MBio">
        <title>Novel metabolic attributes of the genus Cyanothece, comprising a group of unicellular nitrogen-fixing Cyanobacteria.</title>
        <authorList>
            <person name="Bandyopadhyay A."/>
            <person name="Elvitigala T."/>
            <person name="Welsh E."/>
            <person name="Stockel J."/>
            <person name="Liberton M."/>
            <person name="Min H."/>
            <person name="Sherman L.A."/>
            <person name="Pakrasi H.B."/>
        </authorList>
    </citation>
    <scope>NUCLEOTIDE SEQUENCE [LARGE SCALE GENOMIC DNA]</scope>
    <source>
        <strain>PCC 7424</strain>
    </source>
</reference>
<dbReference type="EC" id="2.4.2.17" evidence="1"/>
<dbReference type="EMBL" id="CP001291">
    <property type="protein sequence ID" value="ACK73424.1"/>
    <property type="molecule type" value="Genomic_DNA"/>
</dbReference>
<dbReference type="RefSeq" id="WP_015957004.1">
    <property type="nucleotide sequence ID" value="NC_011729.1"/>
</dbReference>
<dbReference type="SMR" id="B7KGT7"/>
<dbReference type="STRING" id="65393.PCC7424_5072"/>
<dbReference type="KEGG" id="cyc:PCC7424_5072"/>
<dbReference type="eggNOG" id="COG0040">
    <property type="taxonomic scope" value="Bacteria"/>
</dbReference>
<dbReference type="HOGENOM" id="CLU_038115_2_0_3"/>
<dbReference type="OrthoDB" id="9801867at2"/>
<dbReference type="UniPathway" id="UPA00031">
    <property type="reaction ID" value="UER00006"/>
</dbReference>
<dbReference type="Proteomes" id="UP000002384">
    <property type="component" value="Chromosome"/>
</dbReference>
<dbReference type="GO" id="GO:0005737">
    <property type="term" value="C:cytoplasm"/>
    <property type="evidence" value="ECO:0007669"/>
    <property type="project" value="UniProtKB-SubCell"/>
</dbReference>
<dbReference type="GO" id="GO:0005524">
    <property type="term" value="F:ATP binding"/>
    <property type="evidence" value="ECO:0007669"/>
    <property type="project" value="UniProtKB-KW"/>
</dbReference>
<dbReference type="GO" id="GO:0003879">
    <property type="term" value="F:ATP phosphoribosyltransferase activity"/>
    <property type="evidence" value="ECO:0007669"/>
    <property type="project" value="UniProtKB-UniRule"/>
</dbReference>
<dbReference type="GO" id="GO:0000105">
    <property type="term" value="P:L-histidine biosynthetic process"/>
    <property type="evidence" value="ECO:0007669"/>
    <property type="project" value="UniProtKB-UniRule"/>
</dbReference>
<dbReference type="CDD" id="cd13595">
    <property type="entry name" value="PBP2_HisGs"/>
    <property type="match status" value="1"/>
</dbReference>
<dbReference type="FunFam" id="3.40.190.10:FF:000008">
    <property type="entry name" value="ATP phosphoribosyltransferase"/>
    <property type="match status" value="1"/>
</dbReference>
<dbReference type="Gene3D" id="3.40.190.10">
    <property type="entry name" value="Periplasmic binding protein-like II"/>
    <property type="match status" value="2"/>
</dbReference>
<dbReference type="HAMAP" id="MF_01018">
    <property type="entry name" value="HisG_Short"/>
    <property type="match status" value="1"/>
</dbReference>
<dbReference type="InterPro" id="IPR013820">
    <property type="entry name" value="ATP_PRibTrfase_cat"/>
</dbReference>
<dbReference type="InterPro" id="IPR018198">
    <property type="entry name" value="ATP_PRibTrfase_CS"/>
</dbReference>
<dbReference type="InterPro" id="IPR001348">
    <property type="entry name" value="ATP_PRibTrfase_HisG"/>
</dbReference>
<dbReference type="InterPro" id="IPR024893">
    <property type="entry name" value="ATP_PRibTrfase_HisG_short"/>
</dbReference>
<dbReference type="NCBIfam" id="TIGR00070">
    <property type="entry name" value="hisG"/>
    <property type="match status" value="1"/>
</dbReference>
<dbReference type="PANTHER" id="PTHR21403:SF8">
    <property type="entry name" value="ATP PHOSPHORIBOSYLTRANSFERASE"/>
    <property type="match status" value="1"/>
</dbReference>
<dbReference type="PANTHER" id="PTHR21403">
    <property type="entry name" value="ATP PHOSPHORIBOSYLTRANSFERASE ATP-PRTASE"/>
    <property type="match status" value="1"/>
</dbReference>
<dbReference type="Pfam" id="PF01634">
    <property type="entry name" value="HisG"/>
    <property type="match status" value="1"/>
</dbReference>
<dbReference type="SUPFAM" id="SSF53850">
    <property type="entry name" value="Periplasmic binding protein-like II"/>
    <property type="match status" value="1"/>
</dbReference>
<dbReference type="PROSITE" id="PS01316">
    <property type="entry name" value="ATP_P_PHORIBOSYLTR"/>
    <property type="match status" value="1"/>
</dbReference>
<proteinExistence type="inferred from homology"/>
<comment type="function">
    <text evidence="1">Catalyzes the condensation of ATP and 5-phosphoribose 1-diphosphate to form N'-(5'-phosphoribosyl)-ATP (PR-ATP). Has a crucial role in the pathway because the rate of histidine biosynthesis seems to be controlled primarily by regulation of HisG enzymatic activity.</text>
</comment>
<comment type="catalytic activity">
    <reaction evidence="1">
        <text>1-(5-phospho-beta-D-ribosyl)-ATP + diphosphate = 5-phospho-alpha-D-ribose 1-diphosphate + ATP</text>
        <dbReference type="Rhea" id="RHEA:18473"/>
        <dbReference type="ChEBI" id="CHEBI:30616"/>
        <dbReference type="ChEBI" id="CHEBI:33019"/>
        <dbReference type="ChEBI" id="CHEBI:58017"/>
        <dbReference type="ChEBI" id="CHEBI:73183"/>
        <dbReference type="EC" id="2.4.2.17"/>
    </reaction>
</comment>
<comment type="pathway">
    <text evidence="1">Amino-acid biosynthesis; L-histidine biosynthesis; L-histidine from 5-phospho-alpha-D-ribose 1-diphosphate: step 1/9.</text>
</comment>
<comment type="subunit">
    <text evidence="1">Heteromultimer composed of HisG and HisZ subunits.</text>
</comment>
<comment type="subcellular location">
    <subcellularLocation>
        <location evidence="1">Cytoplasm</location>
    </subcellularLocation>
</comment>
<comment type="domain">
    <text>Lacks the C-terminal regulatory region which is replaced by HisZ.</text>
</comment>
<comment type="similarity">
    <text evidence="1">Belongs to the ATP phosphoribosyltransferase family. Short subfamily.</text>
</comment>
<evidence type="ECO:0000255" key="1">
    <source>
        <dbReference type="HAMAP-Rule" id="MF_01018"/>
    </source>
</evidence>
<gene>
    <name evidence="1" type="primary">hisG</name>
    <name type="ordered locus">PCC7424_5072</name>
</gene>
<protein>
    <recommendedName>
        <fullName evidence="1">ATP phosphoribosyltransferase</fullName>
        <shortName evidence="1">ATP-PRT</shortName>
        <shortName evidence="1">ATP-PRTase</shortName>
        <ecNumber evidence="1">2.4.2.17</ecNumber>
    </recommendedName>
</protein>